<dbReference type="EC" id="3.6.5.n1" evidence="1"/>
<dbReference type="EMBL" id="CP000033">
    <property type="protein sequence ID" value="AAV43078.1"/>
    <property type="molecule type" value="Genomic_DNA"/>
</dbReference>
<dbReference type="RefSeq" id="WP_011254395.1">
    <property type="nucleotide sequence ID" value="NC_006814.3"/>
</dbReference>
<dbReference type="RefSeq" id="YP_194109.1">
    <property type="nucleotide sequence ID" value="NC_006814.3"/>
</dbReference>
<dbReference type="SMR" id="Q5FJP6"/>
<dbReference type="STRING" id="272621.LBA1245"/>
<dbReference type="GeneID" id="93289664"/>
<dbReference type="KEGG" id="lac:LBA1245"/>
<dbReference type="PATRIC" id="fig|272621.13.peg.1180"/>
<dbReference type="eggNOG" id="COG0481">
    <property type="taxonomic scope" value="Bacteria"/>
</dbReference>
<dbReference type="HOGENOM" id="CLU_009995_3_3_9"/>
<dbReference type="OrthoDB" id="9801591at2"/>
<dbReference type="BioCyc" id="LACI272621:G1G49-1228-MONOMER"/>
<dbReference type="Proteomes" id="UP000006381">
    <property type="component" value="Chromosome"/>
</dbReference>
<dbReference type="GO" id="GO:0005886">
    <property type="term" value="C:plasma membrane"/>
    <property type="evidence" value="ECO:0007669"/>
    <property type="project" value="UniProtKB-SubCell"/>
</dbReference>
<dbReference type="GO" id="GO:0005525">
    <property type="term" value="F:GTP binding"/>
    <property type="evidence" value="ECO:0007669"/>
    <property type="project" value="UniProtKB-UniRule"/>
</dbReference>
<dbReference type="GO" id="GO:0003924">
    <property type="term" value="F:GTPase activity"/>
    <property type="evidence" value="ECO:0007669"/>
    <property type="project" value="UniProtKB-UniRule"/>
</dbReference>
<dbReference type="GO" id="GO:0043022">
    <property type="term" value="F:ribosome binding"/>
    <property type="evidence" value="ECO:0007669"/>
    <property type="project" value="UniProtKB-UniRule"/>
</dbReference>
<dbReference type="GO" id="GO:0003746">
    <property type="term" value="F:translation elongation factor activity"/>
    <property type="evidence" value="ECO:0007669"/>
    <property type="project" value="UniProtKB-UniRule"/>
</dbReference>
<dbReference type="GO" id="GO:0045727">
    <property type="term" value="P:positive regulation of translation"/>
    <property type="evidence" value="ECO:0007669"/>
    <property type="project" value="UniProtKB-UniRule"/>
</dbReference>
<dbReference type="CDD" id="cd03699">
    <property type="entry name" value="EF4_II"/>
    <property type="match status" value="1"/>
</dbReference>
<dbReference type="CDD" id="cd16260">
    <property type="entry name" value="EF4_III"/>
    <property type="match status" value="1"/>
</dbReference>
<dbReference type="CDD" id="cd01890">
    <property type="entry name" value="LepA"/>
    <property type="match status" value="1"/>
</dbReference>
<dbReference type="CDD" id="cd03709">
    <property type="entry name" value="lepA_C"/>
    <property type="match status" value="1"/>
</dbReference>
<dbReference type="FunFam" id="3.40.50.300:FF:000078">
    <property type="entry name" value="Elongation factor 4"/>
    <property type="match status" value="1"/>
</dbReference>
<dbReference type="FunFam" id="2.40.30.10:FF:000015">
    <property type="entry name" value="Translation factor GUF1, mitochondrial"/>
    <property type="match status" value="1"/>
</dbReference>
<dbReference type="FunFam" id="3.30.70.240:FF:000007">
    <property type="entry name" value="Translation factor GUF1, mitochondrial"/>
    <property type="match status" value="1"/>
</dbReference>
<dbReference type="FunFam" id="3.30.70.2570:FF:000001">
    <property type="entry name" value="Translation factor GUF1, mitochondrial"/>
    <property type="match status" value="1"/>
</dbReference>
<dbReference type="FunFam" id="3.30.70.870:FF:000004">
    <property type="entry name" value="Translation factor GUF1, mitochondrial"/>
    <property type="match status" value="1"/>
</dbReference>
<dbReference type="Gene3D" id="3.30.70.240">
    <property type="match status" value="1"/>
</dbReference>
<dbReference type="Gene3D" id="3.30.70.2570">
    <property type="entry name" value="Elongation factor 4, C-terminal domain"/>
    <property type="match status" value="1"/>
</dbReference>
<dbReference type="Gene3D" id="3.30.70.870">
    <property type="entry name" value="Elongation Factor G (Translational Gtpase), domain 3"/>
    <property type="match status" value="1"/>
</dbReference>
<dbReference type="Gene3D" id="3.40.50.300">
    <property type="entry name" value="P-loop containing nucleotide triphosphate hydrolases"/>
    <property type="match status" value="1"/>
</dbReference>
<dbReference type="Gene3D" id="2.40.30.10">
    <property type="entry name" value="Translation factors"/>
    <property type="match status" value="1"/>
</dbReference>
<dbReference type="HAMAP" id="MF_00071">
    <property type="entry name" value="LepA"/>
    <property type="match status" value="1"/>
</dbReference>
<dbReference type="InterPro" id="IPR006297">
    <property type="entry name" value="EF-4"/>
</dbReference>
<dbReference type="InterPro" id="IPR035647">
    <property type="entry name" value="EFG_III/V"/>
</dbReference>
<dbReference type="InterPro" id="IPR000640">
    <property type="entry name" value="EFG_V-like"/>
</dbReference>
<dbReference type="InterPro" id="IPR004161">
    <property type="entry name" value="EFTu-like_2"/>
</dbReference>
<dbReference type="InterPro" id="IPR038363">
    <property type="entry name" value="LepA_C_sf"/>
</dbReference>
<dbReference type="InterPro" id="IPR013842">
    <property type="entry name" value="LepA_CTD"/>
</dbReference>
<dbReference type="InterPro" id="IPR035654">
    <property type="entry name" value="LepA_IV"/>
</dbReference>
<dbReference type="InterPro" id="IPR027417">
    <property type="entry name" value="P-loop_NTPase"/>
</dbReference>
<dbReference type="InterPro" id="IPR005225">
    <property type="entry name" value="Small_GTP-bd"/>
</dbReference>
<dbReference type="InterPro" id="IPR000795">
    <property type="entry name" value="T_Tr_GTP-bd_dom"/>
</dbReference>
<dbReference type="NCBIfam" id="TIGR01393">
    <property type="entry name" value="lepA"/>
    <property type="match status" value="1"/>
</dbReference>
<dbReference type="NCBIfam" id="TIGR00231">
    <property type="entry name" value="small_GTP"/>
    <property type="match status" value="1"/>
</dbReference>
<dbReference type="PANTHER" id="PTHR43512:SF4">
    <property type="entry name" value="TRANSLATION FACTOR GUF1 HOMOLOG, CHLOROPLASTIC"/>
    <property type="match status" value="1"/>
</dbReference>
<dbReference type="PANTHER" id="PTHR43512">
    <property type="entry name" value="TRANSLATION FACTOR GUF1-RELATED"/>
    <property type="match status" value="1"/>
</dbReference>
<dbReference type="Pfam" id="PF00679">
    <property type="entry name" value="EFG_C"/>
    <property type="match status" value="1"/>
</dbReference>
<dbReference type="Pfam" id="PF00009">
    <property type="entry name" value="GTP_EFTU"/>
    <property type="match status" value="1"/>
</dbReference>
<dbReference type="Pfam" id="PF03144">
    <property type="entry name" value="GTP_EFTU_D2"/>
    <property type="match status" value="1"/>
</dbReference>
<dbReference type="Pfam" id="PF06421">
    <property type="entry name" value="LepA_C"/>
    <property type="match status" value="1"/>
</dbReference>
<dbReference type="PRINTS" id="PR00315">
    <property type="entry name" value="ELONGATNFCT"/>
</dbReference>
<dbReference type="SMART" id="SM00838">
    <property type="entry name" value="EFG_C"/>
    <property type="match status" value="1"/>
</dbReference>
<dbReference type="SUPFAM" id="SSF54980">
    <property type="entry name" value="EF-G C-terminal domain-like"/>
    <property type="match status" value="2"/>
</dbReference>
<dbReference type="SUPFAM" id="SSF52540">
    <property type="entry name" value="P-loop containing nucleoside triphosphate hydrolases"/>
    <property type="match status" value="1"/>
</dbReference>
<dbReference type="PROSITE" id="PS51722">
    <property type="entry name" value="G_TR_2"/>
    <property type="match status" value="1"/>
</dbReference>
<sequence>MDIKKLKDYQNHIRNFSIVAHIDHGKSTIADRILELTDTVSERQLKNQMLDDMPLERQRGITIKMNSVEVKYHAKNGEDYIFHLIDTPGHVDFSYEVSRSLAACEGALLVVDASQGVQAQTLANTYLAIDDDLEIVPVINKIDLPSADPENAKEEIEEMLGLDASDAVEVSGKTGQGIPELLEKIVTDIPAPSGDIEAPLKALIFDSKYDDYRGVVLSVRIEDGTVKPGDKIQIMNTGKEYEVTEVGVSSPHPVKKDILIAGDVGYITANIKSVRETRVGDTITDAGHPTAEPLPGYRQIPPMVYSGMYPVDNRDYDDLKEALQKLQLNDAALEFEPETSTALGFGFRCGFLGLLHMDVVQERLEQEFDLDLIMTAPSVDYHAIMNDGTTKVIDNPSDLPDAGEYKEVQEPYVKAEIMVPNDYVGPVMELCQRKRGEFVTMDYLDKYRVNVIYNMPLAEIIFDFFDDLKSSTKGYASLDYEITGYRATDLVKIDILLNKEPIDALSFIAHRSEAQDRARQMTSMLKKLIPRQNFEVDIQGAIGAKIISRATIKPYRKDVTWKIHTGDPDRRAKLLEKQKRGKKRMKAVGRVEVPQDAFMAVLKMNDDDIKGK</sequence>
<name>LEPA_LACAC</name>
<accession>Q5FJP6</accession>
<evidence type="ECO:0000255" key="1">
    <source>
        <dbReference type="HAMAP-Rule" id="MF_00071"/>
    </source>
</evidence>
<comment type="function">
    <text evidence="1">Required for accurate and efficient protein synthesis under certain stress conditions. May act as a fidelity factor of the translation reaction, by catalyzing a one-codon backward translocation of tRNAs on improperly translocated ribosomes. Back-translocation proceeds from a post-translocation (POST) complex to a pre-translocation (PRE) complex, thus giving elongation factor G a second chance to translocate the tRNAs correctly. Binds to ribosomes in a GTP-dependent manner.</text>
</comment>
<comment type="catalytic activity">
    <reaction evidence="1">
        <text>GTP + H2O = GDP + phosphate + H(+)</text>
        <dbReference type="Rhea" id="RHEA:19669"/>
        <dbReference type="ChEBI" id="CHEBI:15377"/>
        <dbReference type="ChEBI" id="CHEBI:15378"/>
        <dbReference type="ChEBI" id="CHEBI:37565"/>
        <dbReference type="ChEBI" id="CHEBI:43474"/>
        <dbReference type="ChEBI" id="CHEBI:58189"/>
        <dbReference type="EC" id="3.6.5.n1"/>
    </reaction>
</comment>
<comment type="subcellular location">
    <subcellularLocation>
        <location evidence="1">Cell membrane</location>
        <topology evidence="1">Peripheral membrane protein</topology>
        <orientation evidence="1">Cytoplasmic side</orientation>
    </subcellularLocation>
</comment>
<comment type="similarity">
    <text evidence="1">Belongs to the TRAFAC class translation factor GTPase superfamily. Classic translation factor GTPase family. LepA subfamily.</text>
</comment>
<organism>
    <name type="scientific">Lactobacillus acidophilus (strain ATCC 700396 / NCK56 / N2 / NCFM)</name>
    <dbReference type="NCBI Taxonomy" id="272621"/>
    <lineage>
        <taxon>Bacteria</taxon>
        <taxon>Bacillati</taxon>
        <taxon>Bacillota</taxon>
        <taxon>Bacilli</taxon>
        <taxon>Lactobacillales</taxon>
        <taxon>Lactobacillaceae</taxon>
        <taxon>Lactobacillus</taxon>
    </lineage>
</organism>
<feature type="chain" id="PRO_0000224767" description="Elongation factor 4">
    <location>
        <begin position="1"/>
        <end position="612"/>
    </location>
</feature>
<feature type="domain" description="tr-type G">
    <location>
        <begin position="11"/>
        <end position="193"/>
    </location>
</feature>
<feature type="binding site" evidence="1">
    <location>
        <begin position="23"/>
        <end position="28"/>
    </location>
    <ligand>
        <name>GTP</name>
        <dbReference type="ChEBI" id="CHEBI:37565"/>
    </ligand>
</feature>
<feature type="binding site" evidence="1">
    <location>
        <begin position="140"/>
        <end position="143"/>
    </location>
    <ligand>
        <name>GTP</name>
        <dbReference type="ChEBI" id="CHEBI:37565"/>
    </ligand>
</feature>
<reference key="1">
    <citation type="journal article" date="2005" name="Proc. Natl. Acad. Sci. U.S.A.">
        <title>Complete genome sequence of the probiotic lactic acid bacterium Lactobacillus acidophilus NCFM.</title>
        <authorList>
            <person name="Altermann E."/>
            <person name="Russell W.M."/>
            <person name="Azcarate-Peril M.A."/>
            <person name="Barrangou R."/>
            <person name="Buck B.L."/>
            <person name="McAuliffe O."/>
            <person name="Souther N."/>
            <person name="Dobson A."/>
            <person name="Duong T."/>
            <person name="Callanan M."/>
            <person name="Lick S."/>
            <person name="Hamrick A."/>
            <person name="Cano R."/>
            <person name="Klaenhammer T.R."/>
        </authorList>
    </citation>
    <scope>NUCLEOTIDE SEQUENCE [LARGE SCALE GENOMIC DNA]</scope>
    <source>
        <strain>ATCC 700396 / NCK56 / N2 / NCFM</strain>
    </source>
</reference>
<gene>
    <name evidence="1" type="primary">lepA</name>
    <name type="ordered locus">LBA1245</name>
</gene>
<keyword id="KW-1003">Cell membrane</keyword>
<keyword id="KW-0342">GTP-binding</keyword>
<keyword id="KW-0378">Hydrolase</keyword>
<keyword id="KW-0472">Membrane</keyword>
<keyword id="KW-0547">Nucleotide-binding</keyword>
<keyword id="KW-0648">Protein biosynthesis</keyword>
<keyword id="KW-1185">Reference proteome</keyword>
<proteinExistence type="inferred from homology"/>
<protein>
    <recommendedName>
        <fullName evidence="1">Elongation factor 4</fullName>
        <shortName evidence="1">EF-4</shortName>
        <ecNumber evidence="1">3.6.5.n1</ecNumber>
    </recommendedName>
    <alternativeName>
        <fullName evidence="1">Ribosomal back-translocase LepA</fullName>
    </alternativeName>
</protein>